<protein>
    <recommendedName>
        <fullName>F protein</fullName>
    </recommendedName>
    <alternativeName>
        <fullName>Alternate reading frame protein/F-protein</fullName>
        <shortName>ARFP/F</shortName>
    </alternativeName>
    <alternativeName>
        <fullName>Frameshifted protein</fullName>
    </alternativeName>
    <alternativeName>
        <fullName>p16</fullName>
    </alternativeName>
    <alternativeName>
        <fullName>p17</fullName>
    </alternativeName>
</protein>
<name>F_HCV77</name>
<comment type="function">
    <text evidence="5">Contributes to the RIGI-mediated inhibition of type I interferon production.</text>
</comment>
<comment type="interaction">
    <interactant intactId="EBI-9351969">
        <id>P0C045</id>
    </interactant>
    <interactant intactId="EBI-1104540">
        <id>Q63HM2</id>
        <label>PCNX4</label>
    </interactant>
    <organismsDiffer>true</organismsDiffer>
    <experiments>3</experiments>
</comment>
<comment type="interaction">
    <interactant intactId="EBI-9351969">
        <id>P0C045</id>
    </interactant>
    <interactant intactId="EBI-359873">
        <id>Q9UHV9</id>
        <label>PFDN2</label>
    </interactant>
    <organismsDiffer>true</organismsDiffer>
    <experiments>4</experiments>
</comment>
<comment type="subcellular location">
    <subcellularLocation>
        <location evidence="4">Host cytoplasm</location>
    </subcellularLocation>
    <subcellularLocation>
        <location evidence="4">Host cytoplasm</location>
        <location evidence="4">Host perinuclear region</location>
    </subcellularLocation>
</comment>
<comment type="alternative products">
    <event type="ribosomal frameshifting"/>
    <isoform>
        <id>P0C045-1</id>
        <name>F protein</name>
        <name>Frameshifted protein</name>
        <sequence type="displayed"/>
    </isoform>
    <isoform>
        <id>P27958-1</id>
        <name>Genome polyprotein</name>
        <sequence type="external"/>
    </isoform>
    <text evidence="3">The exact location of the ribosomal frameshift is unknown. The F protein seems to be generated by a -2 ribosomal frameshift located in the vicinity of codon 11 of the core protein coding sequence. However, some F proteins may also be generated by +1 ribosomal frameshift. Since the core gene encodes alternative reading frame proteins (ARFPs), many functions depicted for the core protein might belong to the ARFPs.</text>
</comment>
<comment type="miscellaneous">
    <text>This protein is very unstable.</text>
</comment>
<comment type="miscellaneous">
    <molecule>Isoform F protein</molecule>
    <text>Produced by ribosomal frameshifting.</text>
</comment>
<organismHost>
    <name type="scientific">Homo sapiens</name>
    <name type="common">Human</name>
    <dbReference type="NCBI Taxonomy" id="9606"/>
</organismHost>
<dbReference type="EMBL" id="M67463">
    <property type="status" value="NOT_ANNOTATED_CDS"/>
    <property type="molecule type" value="Genomic_RNA"/>
</dbReference>
<dbReference type="EMBL" id="AF009606">
    <property type="status" value="NOT_ANNOTATED_CDS"/>
    <property type="molecule type" value="Genomic_RNA"/>
</dbReference>
<dbReference type="IntAct" id="P0C045">
    <property type="interactions" value="13"/>
</dbReference>
<dbReference type="euHCVdb" id="AF009606"/>
<dbReference type="euHCVdb" id="M67463"/>
<dbReference type="Proteomes" id="UP000000518">
    <property type="component" value="Segment"/>
</dbReference>
<dbReference type="Proteomes" id="UP000115192">
    <property type="component" value="Genome"/>
</dbReference>
<dbReference type="GO" id="GO:0042025">
    <property type="term" value="C:host cell nucleus"/>
    <property type="evidence" value="ECO:0000314"/>
    <property type="project" value="AgBase"/>
</dbReference>
<dbReference type="GO" id="GO:0044220">
    <property type="term" value="C:host cell perinuclear region of cytoplasm"/>
    <property type="evidence" value="ECO:0007669"/>
    <property type="project" value="UniProtKB-SubCell"/>
</dbReference>
<dbReference type="GO" id="GO:0019028">
    <property type="term" value="C:viral capsid"/>
    <property type="evidence" value="ECO:0007669"/>
    <property type="project" value="InterPro"/>
</dbReference>
<dbReference type="GO" id="GO:0001848">
    <property type="term" value="F:complement binding"/>
    <property type="evidence" value="ECO:0000353"/>
    <property type="project" value="AgBase"/>
</dbReference>
<dbReference type="GO" id="GO:0019899">
    <property type="term" value="F:enzyme binding"/>
    <property type="evidence" value="ECO:0000353"/>
    <property type="project" value="AgBase"/>
</dbReference>
<dbReference type="GO" id="GO:0097655">
    <property type="term" value="F:serpin family protein binding"/>
    <property type="evidence" value="ECO:0000353"/>
    <property type="project" value="AgBase"/>
</dbReference>
<dbReference type="GO" id="GO:0031267">
    <property type="term" value="F:small GTPase binding"/>
    <property type="evidence" value="ECO:0000353"/>
    <property type="project" value="AgBase"/>
</dbReference>
<dbReference type="GO" id="GO:0005198">
    <property type="term" value="F:structural molecule activity"/>
    <property type="evidence" value="ECO:0007669"/>
    <property type="project" value="InterPro"/>
</dbReference>
<dbReference type="GO" id="GO:0035375">
    <property type="term" value="F:zymogen binding"/>
    <property type="evidence" value="ECO:0000353"/>
    <property type="project" value="AgBase"/>
</dbReference>
<dbReference type="GO" id="GO:0051494">
    <property type="term" value="P:negative regulation of cytoskeleton organization"/>
    <property type="evidence" value="ECO:0000314"/>
    <property type="project" value="AgBase"/>
</dbReference>
<dbReference type="GO" id="GO:0039540">
    <property type="term" value="P:symbiont-mediated suppression of host cytoplasmic pattern recognition receptor signaling pathway via inhibition of RIG-I activity"/>
    <property type="evidence" value="ECO:0007669"/>
    <property type="project" value="UniProtKB-KW"/>
</dbReference>
<dbReference type="GO" id="GO:0075523">
    <property type="term" value="P:viral translational frameshifting"/>
    <property type="evidence" value="ECO:0007669"/>
    <property type="project" value="UniProtKB-KW"/>
</dbReference>
<dbReference type="InterPro" id="IPR002522">
    <property type="entry name" value="HCV_core_N"/>
</dbReference>
<dbReference type="Pfam" id="PF01543">
    <property type="entry name" value="HCV_capsid"/>
    <property type="match status" value="1"/>
</dbReference>
<keyword id="KW-1035">Host cytoplasm</keyword>
<keyword id="KW-0945">Host-virus interaction</keyword>
<keyword id="KW-1090">Inhibition of host innate immune response by virus</keyword>
<keyword id="KW-1088">Inhibition of host RIG-I by virus</keyword>
<keyword id="KW-1113">Inhibition of host RLR pathway by virus</keyword>
<keyword id="KW-1185">Reference proteome</keyword>
<keyword id="KW-0688">Ribosomal frameshifting</keyword>
<keyword id="KW-0899">Viral immunoevasion</keyword>
<sequence>MSTNPKPQRKKPNVTPTVAHRTSSSRVAVRSLVEFTCCRAGALDWVCARRGRLPSGRNLEVDVSLSPRHVGPRAGPGLSPGTLGPSMAMRVAGGRDGSCLPVALGLAGAPQTPGVGRAIWVRSSIPLRAASPTSWGTYRSSAPLLEALPGPWRMASGFWKTA</sequence>
<proteinExistence type="evidence at protein level"/>
<evidence type="ECO:0000250" key="1"/>
<evidence type="ECO:0000256" key="2">
    <source>
        <dbReference type="SAM" id="MobiDB-lite"/>
    </source>
</evidence>
<evidence type="ECO:0000269" key="3">
    <source>
    </source>
</evidence>
<evidence type="ECO:0000269" key="4">
    <source>
    </source>
</evidence>
<evidence type="ECO:0000269" key="5">
    <source>
    </source>
</evidence>
<feature type="initiator methionine" description="Removed; by host" evidence="1">
    <location>
        <position position="1"/>
    </location>
</feature>
<feature type="chain" id="PRO_0000109553" description="F protein">
    <location>
        <begin position="2"/>
        <end position="162"/>
    </location>
</feature>
<feature type="region of interest" description="Disordered" evidence="2">
    <location>
        <begin position="1"/>
        <end position="23"/>
    </location>
</feature>
<feature type="compositionally biased region" description="Polar residues" evidence="2">
    <location>
        <begin position="14"/>
        <end position="23"/>
    </location>
</feature>
<organism>
    <name type="scientific">Hepatitis C virus genotype 1a (isolate H77)</name>
    <name type="common">HCV</name>
    <dbReference type="NCBI Taxonomy" id="63746"/>
    <lineage>
        <taxon>Viruses</taxon>
        <taxon>Riboviria</taxon>
        <taxon>Orthornavirae</taxon>
        <taxon>Kitrinoviricota</taxon>
        <taxon>Flasuviricetes</taxon>
        <taxon>Amarillovirales</taxon>
        <taxon>Flaviviridae</taxon>
        <taxon>Hepacivirus</taxon>
        <taxon>Hepacivirus hominis</taxon>
        <taxon>hepatitis C virus genotype 1a</taxon>
    </lineage>
</organism>
<reference key="1">
    <citation type="journal article" date="1991" name="Proc. Natl. Acad. Sci. U.S.A.">
        <title>Genomic structure of the human prototype strain H of hepatitis C virus: comparison with American and Japanese isolates.</title>
        <authorList>
            <person name="Inchauspe G."/>
            <person name="Zebedee S."/>
            <person name="Lee D.H.H."/>
            <person name="Sugitani M."/>
            <person name="Nasoff M."/>
            <person name="Prince A.M."/>
        </authorList>
    </citation>
    <scope>NUCLEOTIDE SEQUENCE [GENOMIC RNA]</scope>
</reference>
<reference key="2">
    <citation type="journal article" date="1997" name="Science">
        <title>Transmission of hepatitis C by intrahepatic inoculation with transcribed RNA.</title>
        <authorList>
            <person name="Kolykhalov A.A."/>
            <person name="Agapov E.V."/>
            <person name="Blight K.J."/>
            <person name="Mihalik K."/>
            <person name="Feinstone S.M."/>
            <person name="Rice C.M."/>
        </authorList>
    </citation>
    <scope>NUCLEOTIDE SEQUENCE [GENOMIC RNA]</scope>
    <source>
        <strain>Isolate H77</strain>
    </source>
</reference>
<reference key="3">
    <citation type="journal article" date="2001" name="EMBO J.">
        <title>Synthesis of a novel hepatitis C virus protein by ribosomal frameshift.</title>
        <authorList>
            <person name="Xu Z."/>
            <person name="Choi J."/>
            <person name="Yen T.S.B."/>
            <person name="Lu W."/>
            <person name="Strohecker A."/>
            <person name="Govindarajan S."/>
            <person name="Chien D."/>
            <person name="Selby M.J."/>
            <person name="Ou J.-H."/>
        </authorList>
    </citation>
    <scope>RIBOSOMAL FRAMESHIFT</scope>
</reference>
<reference key="4">
    <citation type="journal article" date="2003" name="J. Gen. Virol.">
        <title>Characterization of the expression of the hepatitis C virus F protein.</title>
        <authorList>
            <person name="Roussel J."/>
            <person name="Pillez A."/>
            <person name="Montpellier C."/>
            <person name="Duverlie G."/>
            <person name="Cahour A."/>
            <person name="Dubuisson J."/>
            <person name="Wychowski C."/>
        </authorList>
    </citation>
    <scope>CHARACTERIZATION</scope>
    <scope>SUBCELLULAR LOCATION</scope>
</reference>
<reference key="5">
    <citation type="journal article" date="2005" name="Semin. Liver Dis.">
        <title>The hepatitis C virus alternate reading frame (ARF) and its family of novel products: the alternate reading frame protein/F-protein, the double-frameshift protein, and others.</title>
        <authorList>
            <person name="Branch A.D."/>
            <person name="Stump D.D."/>
            <person name="Gutierrez J.A."/>
            <person name="Eng F."/>
            <person name="Walewski J.L."/>
        </authorList>
    </citation>
    <scope>REVIEW</scope>
</reference>
<reference key="6">
    <citation type="journal article" date="2016" name="PLoS ONE">
        <title>Hepatitis C Virus Frameshift/Alternate Reading Frame Protein Suppresses Interferon Responses Mediated by Pattern Recognition Receptor Retinoic-Acid-Inducible Gene-I.</title>
        <authorList>
            <person name="Park S.B."/>
            <person name="Seronello S."/>
            <person name="Mayer W."/>
            <person name="Ojcius D.M."/>
        </authorList>
    </citation>
    <scope>FUNCTION</scope>
    <source>
        <strain>isolate JFH-1</strain>
    </source>
</reference>
<accession>P0C045</accession>